<evidence type="ECO:0000255" key="1">
    <source>
        <dbReference type="HAMAP-Rule" id="MF_00318"/>
    </source>
</evidence>
<feature type="chain" id="PRO_1000115824" description="Enolase">
    <location>
        <begin position="1"/>
        <end position="430"/>
    </location>
</feature>
<feature type="active site" description="Proton donor" evidence="1">
    <location>
        <position position="209"/>
    </location>
</feature>
<feature type="active site" description="Proton acceptor" evidence="1">
    <location>
        <position position="341"/>
    </location>
</feature>
<feature type="binding site" evidence="1">
    <location>
        <position position="167"/>
    </location>
    <ligand>
        <name>(2R)-2-phosphoglycerate</name>
        <dbReference type="ChEBI" id="CHEBI:58289"/>
    </ligand>
</feature>
<feature type="binding site" evidence="1">
    <location>
        <position position="246"/>
    </location>
    <ligand>
        <name>Mg(2+)</name>
        <dbReference type="ChEBI" id="CHEBI:18420"/>
    </ligand>
</feature>
<feature type="binding site" evidence="1">
    <location>
        <position position="289"/>
    </location>
    <ligand>
        <name>Mg(2+)</name>
        <dbReference type="ChEBI" id="CHEBI:18420"/>
    </ligand>
</feature>
<feature type="binding site" evidence="1">
    <location>
        <position position="316"/>
    </location>
    <ligand>
        <name>Mg(2+)</name>
        <dbReference type="ChEBI" id="CHEBI:18420"/>
    </ligand>
</feature>
<feature type="binding site" evidence="1">
    <location>
        <position position="341"/>
    </location>
    <ligand>
        <name>(2R)-2-phosphoglycerate</name>
        <dbReference type="ChEBI" id="CHEBI:58289"/>
    </ligand>
</feature>
<feature type="binding site" evidence="1">
    <location>
        <position position="370"/>
    </location>
    <ligand>
        <name>(2R)-2-phosphoglycerate</name>
        <dbReference type="ChEBI" id="CHEBI:58289"/>
    </ligand>
</feature>
<feature type="binding site" evidence="1">
    <location>
        <position position="371"/>
    </location>
    <ligand>
        <name>(2R)-2-phosphoglycerate</name>
        <dbReference type="ChEBI" id="CHEBI:58289"/>
    </ligand>
</feature>
<feature type="binding site" evidence="1">
    <location>
        <position position="392"/>
    </location>
    <ligand>
        <name>(2R)-2-phosphoglycerate</name>
        <dbReference type="ChEBI" id="CHEBI:58289"/>
    </ligand>
</feature>
<organism>
    <name type="scientific">Alteromonas mediterranea (strain DSM 17117 / CIP 110805 / LMG 28347 / Deep ecotype)</name>
    <dbReference type="NCBI Taxonomy" id="1774373"/>
    <lineage>
        <taxon>Bacteria</taxon>
        <taxon>Pseudomonadati</taxon>
        <taxon>Pseudomonadota</taxon>
        <taxon>Gammaproteobacteria</taxon>
        <taxon>Alteromonadales</taxon>
        <taxon>Alteromonadaceae</taxon>
        <taxon>Alteromonas/Salinimonas group</taxon>
        <taxon>Alteromonas</taxon>
    </lineage>
</organism>
<name>ENO_ALTMD</name>
<reference key="1">
    <citation type="journal article" date="2008" name="ISME J.">
        <title>Comparative genomics of two ecotypes of the marine planktonic copiotroph Alteromonas macleodii suggests alternative lifestyles associated with different kinds of particulate organic matter.</title>
        <authorList>
            <person name="Ivars-Martinez E."/>
            <person name="Martin-Cuadrado A.-B."/>
            <person name="D'Auria G."/>
            <person name="Mira A."/>
            <person name="Ferriera S."/>
            <person name="Johnson J."/>
            <person name="Friedman R."/>
            <person name="Rodriguez-Valera F."/>
        </authorList>
    </citation>
    <scope>NUCLEOTIDE SEQUENCE [LARGE SCALE GENOMIC DNA]</scope>
    <source>
        <strain>DSM 17117 / CIP 110805 / LMG 28347 / Deep ecotype</strain>
    </source>
</reference>
<comment type="function">
    <text evidence="1">Catalyzes the reversible conversion of 2-phosphoglycerate (2-PG) into phosphoenolpyruvate (PEP). It is essential for the degradation of carbohydrates via glycolysis.</text>
</comment>
<comment type="catalytic activity">
    <reaction evidence="1">
        <text>(2R)-2-phosphoglycerate = phosphoenolpyruvate + H2O</text>
        <dbReference type="Rhea" id="RHEA:10164"/>
        <dbReference type="ChEBI" id="CHEBI:15377"/>
        <dbReference type="ChEBI" id="CHEBI:58289"/>
        <dbReference type="ChEBI" id="CHEBI:58702"/>
        <dbReference type="EC" id="4.2.1.11"/>
    </reaction>
</comment>
<comment type="cofactor">
    <cofactor evidence="1">
        <name>Mg(2+)</name>
        <dbReference type="ChEBI" id="CHEBI:18420"/>
    </cofactor>
    <text evidence="1">Binds a second Mg(2+) ion via substrate during catalysis.</text>
</comment>
<comment type="pathway">
    <text evidence="1">Carbohydrate degradation; glycolysis; pyruvate from D-glyceraldehyde 3-phosphate: step 4/5.</text>
</comment>
<comment type="subunit">
    <text evidence="1">Component of the RNA degradosome, a multiprotein complex involved in RNA processing and mRNA degradation.</text>
</comment>
<comment type="subcellular location">
    <subcellularLocation>
        <location evidence="1">Cytoplasm</location>
    </subcellularLocation>
    <subcellularLocation>
        <location evidence="1">Secreted</location>
    </subcellularLocation>
    <subcellularLocation>
        <location evidence="1">Cell surface</location>
    </subcellularLocation>
    <text evidence="1">Fractions of enolase are present in both the cytoplasm and on the cell surface.</text>
</comment>
<comment type="similarity">
    <text evidence="1">Belongs to the enolase family.</text>
</comment>
<keyword id="KW-0963">Cytoplasm</keyword>
<keyword id="KW-0324">Glycolysis</keyword>
<keyword id="KW-0456">Lyase</keyword>
<keyword id="KW-0460">Magnesium</keyword>
<keyword id="KW-0479">Metal-binding</keyword>
<keyword id="KW-0964">Secreted</keyword>
<proteinExistence type="inferred from homology"/>
<sequence>MAKISRIIGREILDSRGNPTVEADVYLESGAMGRAAAPSGASTGSREALELRDGDKSRYLGKGVTKAVAAINDTISPALLGKDALAQADIDGIMIDLDGTENKETLGANAILAVSLAVAKAAAAEKGVALYEHIADLNGTSGQYSMPVPMMNIINGGEHADNNVDIQEFMVQPVGAKSFKEALRMGAEIFHALKKVLSAKGLNTAVGDEGGFAPNLSSNAEALAVIVEAVENAGYKMNEDITLALDCAASEFYKEGKYVLSGEDKSFDSEAFGDYLADLSAQYPIVSIEDGLDESDWDGWASLTKKIGDKVQLVGDDLFVTNTKILKRGIDNGIGNSILIKFNQIGSLTETLNAIKMAKDAGFTAVISHRSGETEDATIADLAVGTAAGQIKTGSLCRSDRVAKYNQLLRIEEALGDAATYKGRSEIKGQ</sequence>
<protein>
    <recommendedName>
        <fullName evidence="1">Enolase</fullName>
        <ecNumber evidence="1">4.2.1.11</ecNumber>
    </recommendedName>
    <alternativeName>
        <fullName evidence="1">2-phospho-D-glycerate hydro-lyase</fullName>
    </alternativeName>
    <alternativeName>
        <fullName evidence="1">2-phosphoglycerate dehydratase</fullName>
    </alternativeName>
</protein>
<dbReference type="EC" id="4.2.1.11" evidence="1"/>
<dbReference type="EMBL" id="CP001103">
    <property type="protein sequence ID" value="AEA97089.1"/>
    <property type="molecule type" value="Genomic_DNA"/>
</dbReference>
<dbReference type="RefSeq" id="WP_012517443.1">
    <property type="nucleotide sequence ID" value="NC_011138.3"/>
</dbReference>
<dbReference type="SMR" id="B4RVU5"/>
<dbReference type="KEGG" id="amc:MADE_1004715"/>
<dbReference type="HOGENOM" id="CLU_031223_2_1_6"/>
<dbReference type="UniPathway" id="UPA00109">
    <property type="reaction ID" value="UER00187"/>
</dbReference>
<dbReference type="Proteomes" id="UP000001870">
    <property type="component" value="Chromosome"/>
</dbReference>
<dbReference type="GO" id="GO:0009986">
    <property type="term" value="C:cell surface"/>
    <property type="evidence" value="ECO:0007669"/>
    <property type="project" value="UniProtKB-SubCell"/>
</dbReference>
<dbReference type="GO" id="GO:0005576">
    <property type="term" value="C:extracellular region"/>
    <property type="evidence" value="ECO:0007669"/>
    <property type="project" value="UniProtKB-SubCell"/>
</dbReference>
<dbReference type="GO" id="GO:0000015">
    <property type="term" value="C:phosphopyruvate hydratase complex"/>
    <property type="evidence" value="ECO:0007669"/>
    <property type="project" value="InterPro"/>
</dbReference>
<dbReference type="GO" id="GO:0000287">
    <property type="term" value="F:magnesium ion binding"/>
    <property type="evidence" value="ECO:0007669"/>
    <property type="project" value="UniProtKB-UniRule"/>
</dbReference>
<dbReference type="GO" id="GO:0004634">
    <property type="term" value="F:phosphopyruvate hydratase activity"/>
    <property type="evidence" value="ECO:0007669"/>
    <property type="project" value="UniProtKB-UniRule"/>
</dbReference>
<dbReference type="GO" id="GO:0006096">
    <property type="term" value="P:glycolytic process"/>
    <property type="evidence" value="ECO:0007669"/>
    <property type="project" value="UniProtKB-UniRule"/>
</dbReference>
<dbReference type="CDD" id="cd03313">
    <property type="entry name" value="enolase"/>
    <property type="match status" value="1"/>
</dbReference>
<dbReference type="FunFam" id="3.20.20.120:FF:000001">
    <property type="entry name" value="Enolase"/>
    <property type="match status" value="1"/>
</dbReference>
<dbReference type="FunFam" id="3.30.390.10:FF:000001">
    <property type="entry name" value="Enolase"/>
    <property type="match status" value="1"/>
</dbReference>
<dbReference type="Gene3D" id="3.20.20.120">
    <property type="entry name" value="Enolase-like C-terminal domain"/>
    <property type="match status" value="1"/>
</dbReference>
<dbReference type="Gene3D" id="3.30.390.10">
    <property type="entry name" value="Enolase-like, N-terminal domain"/>
    <property type="match status" value="1"/>
</dbReference>
<dbReference type="HAMAP" id="MF_00318">
    <property type="entry name" value="Enolase"/>
    <property type="match status" value="1"/>
</dbReference>
<dbReference type="InterPro" id="IPR000941">
    <property type="entry name" value="Enolase"/>
</dbReference>
<dbReference type="InterPro" id="IPR036849">
    <property type="entry name" value="Enolase-like_C_sf"/>
</dbReference>
<dbReference type="InterPro" id="IPR029017">
    <property type="entry name" value="Enolase-like_N"/>
</dbReference>
<dbReference type="InterPro" id="IPR020810">
    <property type="entry name" value="Enolase_C"/>
</dbReference>
<dbReference type="InterPro" id="IPR020809">
    <property type="entry name" value="Enolase_CS"/>
</dbReference>
<dbReference type="InterPro" id="IPR020811">
    <property type="entry name" value="Enolase_N"/>
</dbReference>
<dbReference type="NCBIfam" id="TIGR01060">
    <property type="entry name" value="eno"/>
    <property type="match status" value="1"/>
</dbReference>
<dbReference type="PANTHER" id="PTHR11902">
    <property type="entry name" value="ENOLASE"/>
    <property type="match status" value="1"/>
</dbReference>
<dbReference type="PANTHER" id="PTHR11902:SF1">
    <property type="entry name" value="ENOLASE"/>
    <property type="match status" value="1"/>
</dbReference>
<dbReference type="Pfam" id="PF00113">
    <property type="entry name" value="Enolase_C"/>
    <property type="match status" value="1"/>
</dbReference>
<dbReference type="Pfam" id="PF03952">
    <property type="entry name" value="Enolase_N"/>
    <property type="match status" value="1"/>
</dbReference>
<dbReference type="PIRSF" id="PIRSF001400">
    <property type="entry name" value="Enolase"/>
    <property type="match status" value="1"/>
</dbReference>
<dbReference type="PRINTS" id="PR00148">
    <property type="entry name" value="ENOLASE"/>
</dbReference>
<dbReference type="SFLD" id="SFLDF00002">
    <property type="entry name" value="enolase"/>
    <property type="match status" value="1"/>
</dbReference>
<dbReference type="SFLD" id="SFLDG00178">
    <property type="entry name" value="enolase"/>
    <property type="match status" value="1"/>
</dbReference>
<dbReference type="SMART" id="SM01192">
    <property type="entry name" value="Enolase_C"/>
    <property type="match status" value="1"/>
</dbReference>
<dbReference type="SMART" id="SM01193">
    <property type="entry name" value="Enolase_N"/>
    <property type="match status" value="1"/>
</dbReference>
<dbReference type="SUPFAM" id="SSF51604">
    <property type="entry name" value="Enolase C-terminal domain-like"/>
    <property type="match status" value="1"/>
</dbReference>
<dbReference type="SUPFAM" id="SSF54826">
    <property type="entry name" value="Enolase N-terminal domain-like"/>
    <property type="match status" value="1"/>
</dbReference>
<dbReference type="PROSITE" id="PS00164">
    <property type="entry name" value="ENOLASE"/>
    <property type="match status" value="1"/>
</dbReference>
<accession>B4RVU5</accession>
<accession>F2GBT8</accession>
<gene>
    <name evidence="1" type="primary">eno</name>
    <name type="ordered locus">MADE_1004715</name>
</gene>